<sequence>MSWFYRFFIRDYQNCWMVSIMGTGLSANVLHNFPFAARWLRICSYIMFGFALVCLFTNTIVFFFKHTIYRGTLIQKEEFIDVPNTLFLGCYTMGFQSCINMLCFLSSQSSPQGWINFLYILWIFSVAMSFFTAWVIFSTILTKRAKIEFSTFLPTILLPIVPLTVAASTGSVVIETFSTRLNKKIILNTIVTSFICWSNAIALGFCIIACILWRMIFFKVPARALIFTQFVPIGVLGQGAFGIIMQAINAKTFALSYYQQIPMIEFYSNCVLVQSLILSLFLISFGYFFTFFAVFSVINYGFRHKFTVAWWAMTFPLGTMSISNTQLSKVTNIIFFRVIGAIYGTALILITIVCIVGNTIMAIQKLKSETSSKNLVGII</sequence>
<accession>P0CT94</accession>
<accession>Q9C0Q1</accession>
<gene>
    <name type="ORF">SPBPB10D8.04c</name>
</gene>
<comment type="subcellular location">
    <subcellularLocation>
        <location evidence="1 2">Cell membrane</location>
        <topology evidence="1 2">Multi-pass membrane protein</topology>
    </subcellularLocation>
</comment>
<comment type="similarity">
    <text evidence="2">Belongs to the tellurite-resistance/dicarboxylate transporter (TDT) family.</text>
</comment>
<protein>
    <recommendedName>
        <fullName>Uncharacterized transporter SPBPB10D8.04c</fullName>
    </recommendedName>
</protein>
<keyword id="KW-1003">Cell membrane</keyword>
<keyword id="KW-0472">Membrane</keyword>
<keyword id="KW-1185">Reference proteome</keyword>
<keyword id="KW-0812">Transmembrane</keyword>
<keyword id="KW-1133">Transmembrane helix</keyword>
<keyword id="KW-0813">Transport</keyword>
<dbReference type="EMBL" id="CU329671">
    <property type="protein sequence ID" value="CAC36913.1"/>
    <property type="molecule type" value="Genomic_DNA"/>
</dbReference>
<dbReference type="RefSeq" id="NP_595047.1">
    <property type="nucleotide sequence ID" value="NM_001020952.2"/>
</dbReference>
<dbReference type="RefSeq" id="NP_595048.1">
    <property type="nucleotide sequence ID" value="NM_001020953.2"/>
</dbReference>
<dbReference type="RefSeq" id="NP_595049.1">
    <property type="nucleotide sequence ID" value="NM_001020954.2"/>
</dbReference>
<dbReference type="RefSeq" id="NP_595050.1">
    <property type="nucleotide sequence ID" value="NM_001020955.2"/>
</dbReference>
<dbReference type="FunCoup" id="P0CT94">
    <property type="interactions" value="75"/>
</dbReference>
<dbReference type="STRING" id="284812.P0CT94"/>
<dbReference type="iPTMnet" id="P0CT94"/>
<dbReference type="PaxDb" id="4896-SPBPB10D8.04c.1"/>
<dbReference type="EnsemblFungi" id="SPBPB10D8.04c.1">
    <property type="protein sequence ID" value="SPBPB10D8.04c.1:pep"/>
    <property type="gene ID" value="SPBPB10D8.04c"/>
</dbReference>
<dbReference type="EnsemblFungi" id="SPBPB10D8.05c.1">
    <property type="protein sequence ID" value="SPBPB10D8.05c.1:pep"/>
    <property type="gene ID" value="SPBPB10D8.05c"/>
</dbReference>
<dbReference type="EnsemblFungi" id="SPBPB10D8.06c.1">
    <property type="protein sequence ID" value="SPBPB10D8.06c.1:pep"/>
    <property type="gene ID" value="SPBPB10D8.06c"/>
</dbReference>
<dbReference type="EnsemblFungi" id="SPBPB10D8.07c.1">
    <property type="protein sequence ID" value="SPBPB10D8.07c.1:pep"/>
    <property type="gene ID" value="SPBPB10D8.07c"/>
</dbReference>
<dbReference type="KEGG" id="spo:2541374"/>
<dbReference type="KEGG" id="spo:2541377"/>
<dbReference type="KEGG" id="spo:2541392"/>
<dbReference type="KEGG" id="spo:2541401"/>
<dbReference type="PomBase" id="SPBPB10D8.04c"/>
<dbReference type="VEuPathDB" id="FungiDB:SPBPB10D8.04c"/>
<dbReference type="VEuPathDB" id="FungiDB:SPBPB10D8.05c"/>
<dbReference type="VEuPathDB" id="FungiDB:SPBPB10D8.06c"/>
<dbReference type="VEuPathDB" id="FungiDB:SPBPB10D8.07c"/>
<dbReference type="eggNOG" id="ENOG502QT02">
    <property type="taxonomic scope" value="Eukaryota"/>
</dbReference>
<dbReference type="InParanoid" id="P0CT94"/>
<dbReference type="OMA" id="WIIDAVI"/>
<dbReference type="PhylomeDB" id="P0CT94"/>
<dbReference type="PRO" id="PR:P0CT94"/>
<dbReference type="Proteomes" id="UP000002485">
    <property type="component" value="Chromosome II"/>
</dbReference>
<dbReference type="GO" id="GO:0005886">
    <property type="term" value="C:plasma membrane"/>
    <property type="evidence" value="ECO:0000318"/>
    <property type="project" value="GO_Central"/>
</dbReference>
<dbReference type="GO" id="GO:0000319">
    <property type="term" value="F:sulfite transmembrane transporter activity"/>
    <property type="evidence" value="ECO:0000318"/>
    <property type="project" value="GO_Central"/>
</dbReference>
<dbReference type="GO" id="GO:0000316">
    <property type="term" value="P:sulfite transmembrane transport"/>
    <property type="evidence" value="ECO:0000318"/>
    <property type="project" value="GO_Central"/>
</dbReference>
<dbReference type="CDD" id="cd09318">
    <property type="entry name" value="TDT_SSU1"/>
    <property type="match status" value="1"/>
</dbReference>
<dbReference type="FunFam" id="1.50.10.150:FF:000004">
    <property type="entry name" value="Malic acid transporter"/>
    <property type="match status" value="1"/>
</dbReference>
<dbReference type="Gene3D" id="1.50.10.150">
    <property type="entry name" value="Voltage-dependent anion channel"/>
    <property type="match status" value="1"/>
</dbReference>
<dbReference type="InterPro" id="IPR004695">
    <property type="entry name" value="SLAC1/Mae1/Ssu1/TehA"/>
</dbReference>
<dbReference type="InterPro" id="IPR051629">
    <property type="entry name" value="Sulfite_efflux_TDT"/>
</dbReference>
<dbReference type="InterPro" id="IPR038665">
    <property type="entry name" value="Voltage-dep_anion_channel_sf"/>
</dbReference>
<dbReference type="PANTHER" id="PTHR31686">
    <property type="match status" value="1"/>
</dbReference>
<dbReference type="PANTHER" id="PTHR31686:SF1">
    <property type="entry name" value="SULFITE EFFLUX PUMP SSU1"/>
    <property type="match status" value="1"/>
</dbReference>
<dbReference type="Pfam" id="PF03595">
    <property type="entry name" value="SLAC1"/>
    <property type="match status" value="1"/>
</dbReference>
<feature type="chain" id="PRO_0000319983" description="Uncharacterized transporter SPBPB10D8.04c">
    <location>
        <begin position="1"/>
        <end position="379"/>
    </location>
</feature>
<feature type="topological domain" description="Cytoplasmic" evidence="1">
    <location>
        <begin position="1"/>
        <end position="15"/>
    </location>
</feature>
<feature type="transmembrane region" description="Helical" evidence="2">
    <location>
        <begin position="16"/>
        <end position="36"/>
    </location>
</feature>
<feature type="topological domain" description="Extracellular" evidence="1">
    <location>
        <begin position="37"/>
        <end position="43"/>
    </location>
</feature>
<feature type="transmembrane region" description="Helical" evidence="2">
    <location>
        <begin position="44"/>
        <end position="64"/>
    </location>
</feature>
<feature type="topological domain" description="Cytoplasmic" evidence="1">
    <location>
        <begin position="65"/>
        <end position="84"/>
    </location>
</feature>
<feature type="transmembrane region" description="Helical" evidence="2">
    <location>
        <begin position="85"/>
        <end position="105"/>
    </location>
</feature>
<feature type="topological domain" description="Extracellular" evidence="1">
    <location>
        <begin position="106"/>
        <end position="116"/>
    </location>
</feature>
<feature type="transmembrane region" description="Helical" evidence="2">
    <location>
        <begin position="117"/>
        <end position="137"/>
    </location>
</feature>
<feature type="topological domain" description="Cytoplasmic" evidence="1">
    <location>
        <begin position="138"/>
        <end position="146"/>
    </location>
</feature>
<feature type="transmembrane region" description="Helical" evidence="2">
    <location>
        <begin position="147"/>
        <end position="167"/>
    </location>
</feature>
<feature type="topological domain" description="Extracellular" evidence="1">
    <location>
        <begin position="168"/>
        <end position="192"/>
    </location>
</feature>
<feature type="transmembrane region" description="Helical" evidence="2">
    <location>
        <begin position="193"/>
        <end position="213"/>
    </location>
</feature>
<feature type="topological domain" description="Cytoplasmic" evidence="1">
    <location>
        <begin position="214"/>
        <end position="224"/>
    </location>
</feature>
<feature type="transmembrane region" description="Helical" evidence="2">
    <location>
        <begin position="225"/>
        <end position="245"/>
    </location>
</feature>
<feature type="topological domain" description="Extracellular" evidence="1">
    <location>
        <begin position="246"/>
        <end position="276"/>
    </location>
</feature>
<feature type="transmembrane region" description="Helical" evidence="2">
    <location>
        <begin position="277"/>
        <end position="297"/>
    </location>
</feature>
<feature type="topological domain" description="Cytoplasmic" evidence="1">
    <location>
        <begin position="298"/>
        <end position="307"/>
    </location>
</feature>
<feature type="transmembrane region" description="Helical" evidence="2">
    <location>
        <begin position="308"/>
        <end position="327"/>
    </location>
</feature>
<feature type="topological domain" description="Extracellular" evidence="1">
    <location>
        <begin position="328"/>
        <end position="332"/>
    </location>
</feature>
<feature type="transmembrane region" description="Helical" evidence="2">
    <location>
        <begin position="333"/>
        <end position="353"/>
    </location>
</feature>
<feature type="topological domain" description="Cytoplasmic" evidence="1">
    <location>
        <begin position="354"/>
        <end position="379"/>
    </location>
</feature>
<name>YHJ4_SCHPO</name>
<proteinExistence type="inferred from homology"/>
<reference key="1">
    <citation type="journal article" date="2002" name="Nature">
        <title>The genome sequence of Schizosaccharomyces pombe.</title>
        <authorList>
            <person name="Wood V."/>
            <person name="Gwilliam R."/>
            <person name="Rajandream M.A."/>
            <person name="Lyne M.H."/>
            <person name="Lyne R."/>
            <person name="Stewart A."/>
            <person name="Sgouros J.G."/>
            <person name="Peat N."/>
            <person name="Hayles J."/>
            <person name="Baker S.G."/>
            <person name="Basham D."/>
            <person name="Bowman S."/>
            <person name="Brooks K."/>
            <person name="Brown D."/>
            <person name="Brown S."/>
            <person name="Chillingworth T."/>
            <person name="Churcher C.M."/>
            <person name="Collins M."/>
            <person name="Connor R."/>
            <person name="Cronin A."/>
            <person name="Davis P."/>
            <person name="Feltwell T."/>
            <person name="Fraser A."/>
            <person name="Gentles S."/>
            <person name="Goble A."/>
            <person name="Hamlin N."/>
            <person name="Harris D.E."/>
            <person name="Hidalgo J."/>
            <person name="Hodgson G."/>
            <person name="Holroyd S."/>
            <person name="Hornsby T."/>
            <person name="Howarth S."/>
            <person name="Huckle E.J."/>
            <person name="Hunt S."/>
            <person name="Jagels K."/>
            <person name="James K.D."/>
            <person name="Jones L."/>
            <person name="Jones M."/>
            <person name="Leather S."/>
            <person name="McDonald S."/>
            <person name="McLean J."/>
            <person name="Mooney P."/>
            <person name="Moule S."/>
            <person name="Mungall K.L."/>
            <person name="Murphy L.D."/>
            <person name="Niblett D."/>
            <person name="Odell C."/>
            <person name="Oliver K."/>
            <person name="O'Neil S."/>
            <person name="Pearson D."/>
            <person name="Quail M.A."/>
            <person name="Rabbinowitsch E."/>
            <person name="Rutherford K.M."/>
            <person name="Rutter S."/>
            <person name="Saunders D."/>
            <person name="Seeger K."/>
            <person name="Sharp S."/>
            <person name="Skelton J."/>
            <person name="Simmonds M.N."/>
            <person name="Squares R."/>
            <person name="Squares S."/>
            <person name="Stevens K."/>
            <person name="Taylor K."/>
            <person name="Taylor R.G."/>
            <person name="Tivey A."/>
            <person name="Walsh S.V."/>
            <person name="Warren T."/>
            <person name="Whitehead S."/>
            <person name="Woodward J.R."/>
            <person name="Volckaert G."/>
            <person name="Aert R."/>
            <person name="Robben J."/>
            <person name="Grymonprez B."/>
            <person name="Weltjens I."/>
            <person name="Vanstreels E."/>
            <person name="Rieger M."/>
            <person name="Schaefer M."/>
            <person name="Mueller-Auer S."/>
            <person name="Gabel C."/>
            <person name="Fuchs M."/>
            <person name="Duesterhoeft A."/>
            <person name="Fritzc C."/>
            <person name="Holzer E."/>
            <person name="Moestl D."/>
            <person name="Hilbert H."/>
            <person name="Borzym K."/>
            <person name="Langer I."/>
            <person name="Beck A."/>
            <person name="Lehrach H."/>
            <person name="Reinhardt R."/>
            <person name="Pohl T.M."/>
            <person name="Eger P."/>
            <person name="Zimmermann W."/>
            <person name="Wedler H."/>
            <person name="Wambutt R."/>
            <person name="Purnelle B."/>
            <person name="Goffeau A."/>
            <person name="Cadieu E."/>
            <person name="Dreano S."/>
            <person name="Gloux S."/>
            <person name="Lelaure V."/>
            <person name="Mottier S."/>
            <person name="Galibert F."/>
            <person name="Aves S.J."/>
            <person name="Xiang Z."/>
            <person name="Hunt C."/>
            <person name="Moore K."/>
            <person name="Hurst S.M."/>
            <person name="Lucas M."/>
            <person name="Rochet M."/>
            <person name="Gaillardin C."/>
            <person name="Tallada V.A."/>
            <person name="Garzon A."/>
            <person name="Thode G."/>
            <person name="Daga R.R."/>
            <person name="Cruzado L."/>
            <person name="Jimenez J."/>
            <person name="Sanchez M."/>
            <person name="del Rey F."/>
            <person name="Benito J."/>
            <person name="Dominguez A."/>
            <person name="Revuelta J.L."/>
            <person name="Moreno S."/>
            <person name="Armstrong J."/>
            <person name="Forsburg S.L."/>
            <person name="Cerutti L."/>
            <person name="Lowe T."/>
            <person name="McCombie W.R."/>
            <person name="Paulsen I."/>
            <person name="Potashkin J."/>
            <person name="Shpakovski G.V."/>
            <person name="Ussery D."/>
            <person name="Barrell B.G."/>
            <person name="Nurse P."/>
        </authorList>
    </citation>
    <scope>NUCLEOTIDE SEQUENCE [LARGE SCALE GENOMIC DNA]</scope>
    <source>
        <strain>972 / ATCC 24843</strain>
    </source>
</reference>
<evidence type="ECO:0000250" key="1">
    <source>
        <dbReference type="UniProtKB" id="P41930"/>
    </source>
</evidence>
<evidence type="ECO:0000255" key="2"/>
<organism>
    <name type="scientific">Schizosaccharomyces pombe (strain 972 / ATCC 24843)</name>
    <name type="common">Fission yeast</name>
    <dbReference type="NCBI Taxonomy" id="284812"/>
    <lineage>
        <taxon>Eukaryota</taxon>
        <taxon>Fungi</taxon>
        <taxon>Dikarya</taxon>
        <taxon>Ascomycota</taxon>
        <taxon>Taphrinomycotina</taxon>
        <taxon>Schizosaccharomycetes</taxon>
        <taxon>Schizosaccharomycetales</taxon>
        <taxon>Schizosaccharomycetaceae</taxon>
        <taxon>Schizosaccharomyces</taxon>
    </lineage>
</organism>